<name>CTAA_RHIEC</name>
<sequence length="367" mass="41124">MAVANLTTEQAILSEVHKQNRNRRALRLWLGFVLLALFCLVLVGGATRLTNSGLSITEWKPIHGVIPPLSAAEWDEEFRLYQRIPEFQQLNSSMTVDEFKSIFWWEWAHRLIARGIGVIFALPLLYFWLTGRIEKRLRWPLVGILALGALQGFIGWWMVSSGLSVRTDVSQYRLATHLVMACLIFAGCMWIMRGLSPHSNDPAPARSSRGLAAAIAVFALFQIYLGALVAGLDAGFSYNTWPLMDGAVIPSDLLIQQPFWINAFENPKTVQFIHRIGAYTLFALVLINMVIALRTAPWTTHARRAVLLFALVTVQAAIGVATLLMQVPLHWGLLHQAGALVVFGFAVANWRGFYGEYPHETMIAERD</sequence>
<proteinExistence type="inferred from homology"/>
<comment type="function">
    <text evidence="1">Catalyzes the conversion of heme O to heme A by two successive hydroxylations of the methyl group at C8. The first hydroxylation forms heme I, the second hydroxylation results in an unstable dihydroxymethyl group, which spontaneously dehydrates, resulting in the formyl group of heme A.</text>
</comment>
<comment type="catalytic activity">
    <reaction evidence="1">
        <text>Fe(II)-heme o + 2 A + H2O = Fe(II)-heme a + 2 AH2</text>
        <dbReference type="Rhea" id="RHEA:63388"/>
        <dbReference type="ChEBI" id="CHEBI:13193"/>
        <dbReference type="ChEBI" id="CHEBI:15377"/>
        <dbReference type="ChEBI" id="CHEBI:17499"/>
        <dbReference type="ChEBI" id="CHEBI:60530"/>
        <dbReference type="ChEBI" id="CHEBI:61715"/>
        <dbReference type="EC" id="1.17.99.9"/>
    </reaction>
    <physiologicalReaction direction="left-to-right" evidence="1">
        <dbReference type="Rhea" id="RHEA:63389"/>
    </physiologicalReaction>
</comment>
<comment type="cofactor">
    <cofactor evidence="1">
        <name>heme b</name>
        <dbReference type="ChEBI" id="CHEBI:60344"/>
    </cofactor>
</comment>
<comment type="pathway">
    <text evidence="1">Porphyrin-containing compound metabolism; heme A biosynthesis; heme A from heme O: step 1/1.</text>
</comment>
<comment type="subunit">
    <text evidence="1">Interacts with CtaB.</text>
</comment>
<comment type="subcellular location">
    <subcellularLocation>
        <location evidence="1">Cell membrane</location>
        <topology evidence="1">Multi-pass membrane protein</topology>
    </subcellularLocation>
</comment>
<comment type="similarity">
    <text evidence="1">Belongs to the COX15/CtaA family. Type 2 subfamily.</text>
</comment>
<reference key="1">
    <citation type="journal article" date="2006" name="Proc. Natl. Acad. Sci. U.S.A.">
        <title>The partitioned Rhizobium etli genome: genetic and metabolic redundancy in seven interacting replicons.</title>
        <authorList>
            <person name="Gonzalez V."/>
            <person name="Santamaria R.I."/>
            <person name="Bustos P."/>
            <person name="Hernandez-Gonzalez I."/>
            <person name="Medrano-Soto A."/>
            <person name="Moreno-Hagelsieb G."/>
            <person name="Janga S.C."/>
            <person name="Ramirez M.A."/>
            <person name="Jimenez-Jacinto V."/>
            <person name="Collado-Vides J."/>
            <person name="Davila G."/>
        </authorList>
    </citation>
    <scope>NUCLEOTIDE SEQUENCE [LARGE SCALE GENOMIC DNA]</scope>
    <source>
        <strain>ATCC 51251 / DSM 11541 / JCM 21823 / NBRC 15573 / CFN 42</strain>
    </source>
</reference>
<feature type="chain" id="PRO_0000349060" description="Heme A synthase">
    <location>
        <begin position="1"/>
        <end position="367"/>
    </location>
</feature>
<feature type="transmembrane region" description="Helical" evidence="1">
    <location>
        <begin position="25"/>
        <end position="45"/>
    </location>
</feature>
<feature type="transmembrane region" description="Helical" evidence="1">
    <location>
        <begin position="111"/>
        <end position="131"/>
    </location>
</feature>
<feature type="transmembrane region" description="Helical" evidence="1">
    <location>
        <begin position="139"/>
        <end position="159"/>
    </location>
</feature>
<feature type="transmembrane region" description="Helical" evidence="1">
    <location>
        <begin position="174"/>
        <end position="194"/>
    </location>
</feature>
<feature type="transmembrane region" description="Helical" evidence="1">
    <location>
        <begin position="210"/>
        <end position="230"/>
    </location>
</feature>
<feature type="transmembrane region" description="Helical" evidence="1">
    <location>
        <begin position="272"/>
        <end position="292"/>
    </location>
</feature>
<feature type="transmembrane region" description="Helical" evidence="1">
    <location>
        <begin position="305"/>
        <end position="325"/>
    </location>
</feature>
<feature type="transmembrane region" description="Helical" evidence="1">
    <location>
        <begin position="327"/>
        <end position="347"/>
    </location>
</feature>
<feature type="binding site" description="axial binding residue" evidence="1">
    <location>
        <position position="274"/>
    </location>
    <ligand>
        <name>heme</name>
        <dbReference type="ChEBI" id="CHEBI:30413"/>
    </ligand>
    <ligandPart>
        <name>Fe</name>
        <dbReference type="ChEBI" id="CHEBI:18248"/>
    </ligandPart>
</feature>
<feature type="binding site" description="axial binding residue" evidence="1">
    <location>
        <position position="335"/>
    </location>
    <ligand>
        <name>heme</name>
        <dbReference type="ChEBI" id="CHEBI:30413"/>
    </ligand>
    <ligandPart>
        <name>Fe</name>
        <dbReference type="ChEBI" id="CHEBI:18248"/>
    </ligandPart>
</feature>
<gene>
    <name evidence="1" type="primary">ctaA</name>
    <name type="ordered locus">RHE_CH01565</name>
</gene>
<evidence type="ECO:0000255" key="1">
    <source>
        <dbReference type="HAMAP-Rule" id="MF_01665"/>
    </source>
</evidence>
<accession>Q2K9W9</accession>
<keyword id="KW-1003">Cell membrane</keyword>
<keyword id="KW-0350">Heme biosynthesis</keyword>
<keyword id="KW-0408">Iron</keyword>
<keyword id="KW-0472">Membrane</keyword>
<keyword id="KW-0479">Metal-binding</keyword>
<keyword id="KW-0560">Oxidoreductase</keyword>
<keyword id="KW-1185">Reference proteome</keyword>
<keyword id="KW-0812">Transmembrane</keyword>
<keyword id="KW-1133">Transmembrane helix</keyword>
<dbReference type="EC" id="1.17.99.9" evidence="1"/>
<dbReference type="EMBL" id="CP000133">
    <property type="protein sequence ID" value="ABC90367.1"/>
    <property type="molecule type" value="Genomic_DNA"/>
</dbReference>
<dbReference type="RefSeq" id="WP_011424892.1">
    <property type="nucleotide sequence ID" value="NC_007761.1"/>
</dbReference>
<dbReference type="SMR" id="Q2K9W9"/>
<dbReference type="KEGG" id="ret:RHE_CH01565"/>
<dbReference type="eggNOG" id="COG1612">
    <property type="taxonomic scope" value="Bacteria"/>
</dbReference>
<dbReference type="HOGENOM" id="CLU_017627_0_0_5"/>
<dbReference type="OrthoDB" id="9793156at2"/>
<dbReference type="UniPathway" id="UPA00269">
    <property type="reaction ID" value="UER00713"/>
</dbReference>
<dbReference type="Proteomes" id="UP000001936">
    <property type="component" value="Chromosome"/>
</dbReference>
<dbReference type="GO" id="GO:0005886">
    <property type="term" value="C:plasma membrane"/>
    <property type="evidence" value="ECO:0007669"/>
    <property type="project" value="UniProtKB-SubCell"/>
</dbReference>
<dbReference type="GO" id="GO:0046872">
    <property type="term" value="F:metal ion binding"/>
    <property type="evidence" value="ECO:0007669"/>
    <property type="project" value="UniProtKB-KW"/>
</dbReference>
<dbReference type="GO" id="GO:0016653">
    <property type="term" value="F:oxidoreductase activity, acting on NAD(P)H, heme protein as acceptor"/>
    <property type="evidence" value="ECO:0007669"/>
    <property type="project" value="InterPro"/>
</dbReference>
<dbReference type="GO" id="GO:0006784">
    <property type="term" value="P:heme A biosynthetic process"/>
    <property type="evidence" value="ECO:0007669"/>
    <property type="project" value="UniProtKB-UniRule"/>
</dbReference>
<dbReference type="HAMAP" id="MF_01665">
    <property type="entry name" value="HemeA_synth_type2"/>
    <property type="match status" value="1"/>
</dbReference>
<dbReference type="InterPro" id="IPR003780">
    <property type="entry name" value="COX15/CtaA_fam"/>
</dbReference>
<dbReference type="InterPro" id="IPR023754">
    <property type="entry name" value="HemeA_Synthase_type2"/>
</dbReference>
<dbReference type="PANTHER" id="PTHR23289">
    <property type="entry name" value="CYTOCHROME C OXIDASE ASSEMBLY PROTEIN COX15"/>
    <property type="match status" value="1"/>
</dbReference>
<dbReference type="PANTHER" id="PTHR23289:SF2">
    <property type="entry name" value="CYTOCHROME C OXIDASE ASSEMBLY PROTEIN COX15 HOMOLOG"/>
    <property type="match status" value="1"/>
</dbReference>
<dbReference type="Pfam" id="PF02628">
    <property type="entry name" value="COX15-CtaA"/>
    <property type="match status" value="1"/>
</dbReference>
<organism>
    <name type="scientific">Rhizobium etli (strain ATCC 51251 / DSM 11541 / JCM 21823 / NBRC 15573 / CFN 42)</name>
    <dbReference type="NCBI Taxonomy" id="347834"/>
    <lineage>
        <taxon>Bacteria</taxon>
        <taxon>Pseudomonadati</taxon>
        <taxon>Pseudomonadota</taxon>
        <taxon>Alphaproteobacteria</taxon>
        <taxon>Hyphomicrobiales</taxon>
        <taxon>Rhizobiaceae</taxon>
        <taxon>Rhizobium/Agrobacterium group</taxon>
        <taxon>Rhizobium</taxon>
    </lineage>
</organism>
<protein>
    <recommendedName>
        <fullName evidence="1">Heme A synthase</fullName>
        <shortName evidence="1">HAS</shortName>
        <ecNumber evidence="1">1.17.99.9</ecNumber>
    </recommendedName>
    <alternativeName>
        <fullName evidence="1">Cytochrome aa3-controlling protein</fullName>
    </alternativeName>
</protein>